<gene>
    <name evidence="1" type="primary">psd</name>
    <name type="ordered locus">jhp_1275</name>
</gene>
<reference key="1">
    <citation type="journal article" date="1999" name="Nature">
        <title>Genomic sequence comparison of two unrelated isolates of the human gastric pathogen Helicobacter pylori.</title>
        <authorList>
            <person name="Alm R.A."/>
            <person name="Ling L.-S.L."/>
            <person name="Moir D.T."/>
            <person name="King B.L."/>
            <person name="Brown E.D."/>
            <person name="Doig P.C."/>
            <person name="Smith D.R."/>
            <person name="Noonan B."/>
            <person name="Guild B.C."/>
            <person name="deJonge B.L."/>
            <person name="Carmel G."/>
            <person name="Tummino P.J."/>
            <person name="Caruso A."/>
            <person name="Uria-Nickelsen M."/>
            <person name="Mills D.M."/>
            <person name="Ives C."/>
            <person name="Gibson R."/>
            <person name="Merberg D."/>
            <person name="Mills S.D."/>
            <person name="Jiang Q."/>
            <person name="Taylor D.E."/>
            <person name="Vovis G.F."/>
            <person name="Trust T.J."/>
        </authorList>
    </citation>
    <scope>NUCLEOTIDE SEQUENCE [LARGE SCALE GENOMIC DNA]</scope>
    <source>
        <strain>J99 / ATCC 700824</strain>
    </source>
</reference>
<proteinExistence type="inferred from homology"/>
<dbReference type="EC" id="4.1.1.65" evidence="1"/>
<dbReference type="EMBL" id="AE001439">
    <property type="protein sequence ID" value="AAD06847.1"/>
    <property type="molecule type" value="Genomic_DNA"/>
</dbReference>
<dbReference type="PIR" id="B71828">
    <property type="entry name" value="B71828"/>
</dbReference>
<dbReference type="RefSeq" id="WP_000226231.1">
    <property type="nucleotide sequence ID" value="NC_000921.1"/>
</dbReference>
<dbReference type="SMR" id="Q9ZJN0"/>
<dbReference type="KEGG" id="hpj:jhp_1275"/>
<dbReference type="PATRIC" id="fig|85963.30.peg.1294"/>
<dbReference type="eggNOG" id="COG0688">
    <property type="taxonomic scope" value="Bacteria"/>
</dbReference>
<dbReference type="UniPathway" id="UPA00558">
    <property type="reaction ID" value="UER00616"/>
</dbReference>
<dbReference type="Proteomes" id="UP000000804">
    <property type="component" value="Chromosome"/>
</dbReference>
<dbReference type="GO" id="GO:0005886">
    <property type="term" value="C:plasma membrane"/>
    <property type="evidence" value="ECO:0007669"/>
    <property type="project" value="UniProtKB-SubCell"/>
</dbReference>
<dbReference type="GO" id="GO:0004609">
    <property type="term" value="F:phosphatidylserine decarboxylase activity"/>
    <property type="evidence" value="ECO:0007669"/>
    <property type="project" value="UniProtKB-UniRule"/>
</dbReference>
<dbReference type="GO" id="GO:0006646">
    <property type="term" value="P:phosphatidylethanolamine biosynthetic process"/>
    <property type="evidence" value="ECO:0007669"/>
    <property type="project" value="UniProtKB-UniRule"/>
</dbReference>
<dbReference type="HAMAP" id="MF_00662">
    <property type="entry name" value="PS_decarb_PSD_B_type1"/>
    <property type="match status" value="1"/>
</dbReference>
<dbReference type="InterPro" id="IPR003817">
    <property type="entry name" value="PS_Dcarbxylase"/>
</dbReference>
<dbReference type="InterPro" id="IPR033177">
    <property type="entry name" value="PSD-B"/>
</dbReference>
<dbReference type="InterPro" id="IPR033178">
    <property type="entry name" value="PSD_type1_pro"/>
</dbReference>
<dbReference type="NCBIfam" id="NF003038">
    <property type="entry name" value="PRK03934.1"/>
    <property type="match status" value="1"/>
</dbReference>
<dbReference type="NCBIfam" id="TIGR00163">
    <property type="entry name" value="PS_decarb"/>
    <property type="match status" value="1"/>
</dbReference>
<dbReference type="PANTHER" id="PTHR10067">
    <property type="entry name" value="PHOSPHATIDYLSERINE DECARBOXYLASE"/>
    <property type="match status" value="1"/>
</dbReference>
<dbReference type="PANTHER" id="PTHR10067:SF6">
    <property type="entry name" value="PHOSPHATIDYLSERINE DECARBOXYLASE PROENZYME, MITOCHONDRIAL"/>
    <property type="match status" value="1"/>
</dbReference>
<dbReference type="Pfam" id="PF02666">
    <property type="entry name" value="PS_Dcarbxylase"/>
    <property type="match status" value="1"/>
</dbReference>
<evidence type="ECO:0000255" key="1">
    <source>
        <dbReference type="HAMAP-Rule" id="MF_00662"/>
    </source>
</evidence>
<accession>Q9ZJN0</accession>
<feature type="chain" id="PRO_0000029667" description="Phosphatidylserine decarboxylase beta chain" evidence="1">
    <location>
        <begin position="1"/>
        <end position="235"/>
    </location>
</feature>
<feature type="chain" id="PRO_0000029668" description="Phosphatidylserine decarboxylase alpha chain" evidence="1">
    <location>
        <begin position="236"/>
        <end position="267"/>
    </location>
</feature>
<feature type="active site" description="Charge relay system; for autoendoproteolytic cleavage activity" evidence="1">
    <location>
        <position position="78"/>
    </location>
</feature>
<feature type="active site" description="Charge relay system; for autoendoproteolytic cleavage activity" evidence="1">
    <location>
        <position position="132"/>
    </location>
</feature>
<feature type="active site" description="Charge relay system; for autoendoproteolytic cleavage activity" evidence="1">
    <location>
        <position position="236"/>
    </location>
</feature>
<feature type="active site" description="Schiff-base intermediate with substrate; via pyruvic acid; for decarboxylase activity" evidence="1">
    <location>
        <position position="236"/>
    </location>
</feature>
<feature type="site" description="Cleavage (non-hydrolytic); by autocatalysis" evidence="1">
    <location>
        <begin position="235"/>
        <end position="236"/>
    </location>
</feature>
<feature type="modified residue" description="Pyruvic acid (Ser); by autocatalysis" evidence="1">
    <location>
        <position position="236"/>
    </location>
</feature>
<sequence length="267" mass="30190">MVALSNALSRVFGSVAGYKFPSFIQKSINALYVKIFKIDLSEFEPLENYKSLNALFMRSLKKERPFDKAPNICIAPCDALITECAFLDNDSALQIKGMPYKAHELVGEINPLSPSFFYVNFYLSPKDYHHYHAPCDLEILEARYFAGKLLPVNKPSLHKNKNLFVGNERVALVAKDIQGNKLYFVAVGALNVGKMRFNFDKNIQTNAKARFMQTYSYNPPIKVKKGDNLGNFEMGSTIVLFIQNTAFKDLKEKSVKFGESIGEFHAN</sequence>
<keyword id="KW-1003">Cell membrane</keyword>
<keyword id="KW-0210">Decarboxylase</keyword>
<keyword id="KW-0444">Lipid biosynthesis</keyword>
<keyword id="KW-0443">Lipid metabolism</keyword>
<keyword id="KW-0456">Lyase</keyword>
<keyword id="KW-0472">Membrane</keyword>
<keyword id="KW-0594">Phospholipid biosynthesis</keyword>
<keyword id="KW-1208">Phospholipid metabolism</keyword>
<keyword id="KW-0670">Pyruvate</keyword>
<keyword id="KW-0865">Zymogen</keyword>
<protein>
    <recommendedName>
        <fullName evidence="1">Phosphatidylserine decarboxylase proenzyme</fullName>
        <ecNumber evidence="1">4.1.1.65</ecNumber>
    </recommendedName>
    <component>
        <recommendedName>
            <fullName evidence="1">Phosphatidylserine decarboxylase alpha chain</fullName>
        </recommendedName>
    </component>
    <component>
        <recommendedName>
            <fullName evidence="1">Phosphatidylserine decarboxylase beta chain</fullName>
        </recommendedName>
    </component>
</protein>
<name>PSD_HELPJ</name>
<organism>
    <name type="scientific">Helicobacter pylori (strain J99 / ATCC 700824)</name>
    <name type="common">Campylobacter pylori J99</name>
    <dbReference type="NCBI Taxonomy" id="85963"/>
    <lineage>
        <taxon>Bacteria</taxon>
        <taxon>Pseudomonadati</taxon>
        <taxon>Campylobacterota</taxon>
        <taxon>Epsilonproteobacteria</taxon>
        <taxon>Campylobacterales</taxon>
        <taxon>Helicobacteraceae</taxon>
        <taxon>Helicobacter</taxon>
    </lineage>
</organism>
<comment type="function">
    <text evidence="1">Catalyzes the formation of phosphatidylethanolamine (PtdEtn) from phosphatidylserine (PtdSer).</text>
</comment>
<comment type="catalytic activity">
    <reaction evidence="1">
        <text>a 1,2-diacyl-sn-glycero-3-phospho-L-serine + H(+) = a 1,2-diacyl-sn-glycero-3-phosphoethanolamine + CO2</text>
        <dbReference type="Rhea" id="RHEA:20828"/>
        <dbReference type="ChEBI" id="CHEBI:15378"/>
        <dbReference type="ChEBI" id="CHEBI:16526"/>
        <dbReference type="ChEBI" id="CHEBI:57262"/>
        <dbReference type="ChEBI" id="CHEBI:64612"/>
        <dbReference type="EC" id="4.1.1.65"/>
    </reaction>
</comment>
<comment type="cofactor">
    <cofactor evidence="1">
        <name>pyruvate</name>
        <dbReference type="ChEBI" id="CHEBI:15361"/>
    </cofactor>
    <text evidence="1">Binds 1 pyruvoyl group covalently per subunit.</text>
</comment>
<comment type="pathway">
    <text evidence="1">Phospholipid metabolism; phosphatidylethanolamine biosynthesis; phosphatidylethanolamine from CDP-diacylglycerol: step 2/2.</text>
</comment>
<comment type="subunit">
    <text evidence="1">Heterodimer of a large membrane-associated beta subunit and a small pyruvoyl-containing alpha subunit.</text>
</comment>
<comment type="subcellular location">
    <subcellularLocation>
        <location evidence="1">Cell membrane</location>
        <topology evidence="1">Peripheral membrane protein</topology>
    </subcellularLocation>
</comment>
<comment type="PTM">
    <text evidence="1">Is synthesized initially as an inactive proenzyme. Formation of the active enzyme involves a self-maturation process in which the active site pyruvoyl group is generated from an internal serine residue via an autocatalytic post-translational modification. Two non-identical subunits are generated from the proenzyme in this reaction, and the pyruvate is formed at the N-terminus of the alpha chain, which is derived from the carboxyl end of the proenzyme. The autoendoproteolytic cleavage occurs by a canonical serine protease mechanism, in which the side chain hydroxyl group of the serine supplies its oxygen atom to form the C-terminus of the beta chain, while the remainder of the serine residue undergoes an oxidative deamination to produce ammonia and the pyruvoyl prosthetic group on the alpha chain. During this reaction, the Ser that is part of the protease active site of the proenzyme becomes the pyruvoyl prosthetic group, which constitutes an essential element of the active site of the mature decarboxylase.</text>
</comment>
<comment type="similarity">
    <text evidence="1">Belongs to the phosphatidylserine decarboxylase family. PSD-B subfamily. Prokaryotic type I sub-subfamily.</text>
</comment>